<keyword id="KW-0521">NADP</keyword>
<keyword id="KW-0560">Oxidoreductase</keyword>
<keyword id="KW-1185">Reference proteome</keyword>
<dbReference type="EC" id="1.1.1.-" evidence="3"/>
<dbReference type="EMBL" id="AC004561">
    <property type="protein sequence ID" value="AAC95221.1"/>
    <property type="molecule type" value="Genomic_DNA"/>
</dbReference>
<dbReference type="EMBL" id="CP002685">
    <property type="protein sequence ID" value="AEC08230.1"/>
    <property type="molecule type" value="Genomic_DNA"/>
</dbReference>
<dbReference type="EMBL" id="AY072384">
    <property type="protein sequence ID" value="AAL62376.1"/>
    <property type="molecule type" value="mRNA"/>
</dbReference>
<dbReference type="EMBL" id="BT000135">
    <property type="protein sequence ID" value="AAN15454.1"/>
    <property type="molecule type" value="mRNA"/>
</dbReference>
<dbReference type="PIR" id="F84694">
    <property type="entry name" value="F84694"/>
</dbReference>
<dbReference type="RefSeq" id="NP_180491.1">
    <property type="nucleotide sequence ID" value="NM_128484.3"/>
</dbReference>
<dbReference type="SMR" id="Q42182"/>
<dbReference type="FunCoup" id="Q42182">
    <property type="interactions" value="42"/>
</dbReference>
<dbReference type="STRING" id="3702.Q42182"/>
<dbReference type="PaxDb" id="3702-AT2G29300.2"/>
<dbReference type="ProteomicsDB" id="234325"/>
<dbReference type="EnsemblPlants" id="AT2G29300.1">
    <property type="protein sequence ID" value="AT2G29300.1"/>
    <property type="gene ID" value="AT2G29300"/>
</dbReference>
<dbReference type="GeneID" id="817479"/>
<dbReference type="Gramene" id="AT2G29300.1">
    <property type="protein sequence ID" value="AT2G29300.1"/>
    <property type="gene ID" value="AT2G29300"/>
</dbReference>
<dbReference type="KEGG" id="ath:AT2G29300"/>
<dbReference type="Araport" id="AT2G29300"/>
<dbReference type="TAIR" id="AT2G29300"/>
<dbReference type="eggNOG" id="KOG0725">
    <property type="taxonomic scope" value="Eukaryota"/>
</dbReference>
<dbReference type="HOGENOM" id="CLU_010194_1_1_1"/>
<dbReference type="InParanoid" id="Q42182"/>
<dbReference type="OMA" id="SREDRWT"/>
<dbReference type="OrthoDB" id="417891at2759"/>
<dbReference type="PhylomeDB" id="Q42182"/>
<dbReference type="BioCyc" id="ARA:AT2G29300-MONOMER"/>
<dbReference type="PRO" id="PR:Q42182"/>
<dbReference type="Proteomes" id="UP000006548">
    <property type="component" value="Chromosome 2"/>
</dbReference>
<dbReference type="ExpressionAtlas" id="Q42182">
    <property type="expression patterns" value="baseline and differential"/>
</dbReference>
<dbReference type="GO" id="GO:0016491">
    <property type="term" value="F:oxidoreductase activity"/>
    <property type="evidence" value="ECO:0007669"/>
    <property type="project" value="UniProtKB-KW"/>
</dbReference>
<dbReference type="FunFam" id="3.40.50.720:FF:000084">
    <property type="entry name" value="Short-chain dehydrogenase reductase"/>
    <property type="match status" value="1"/>
</dbReference>
<dbReference type="Gene3D" id="3.40.50.720">
    <property type="entry name" value="NAD(P)-binding Rossmann-like Domain"/>
    <property type="match status" value="1"/>
</dbReference>
<dbReference type="InterPro" id="IPR036291">
    <property type="entry name" value="NAD(P)-bd_dom_sf"/>
</dbReference>
<dbReference type="InterPro" id="IPR002347">
    <property type="entry name" value="SDR_fam"/>
</dbReference>
<dbReference type="InterPro" id="IPR045000">
    <property type="entry name" value="TR"/>
</dbReference>
<dbReference type="PANTHER" id="PTHR42898:SF46">
    <property type="entry name" value="3-OXOACYL-[ACYL-CARRIER-PROTEIN] REDUCTASE"/>
    <property type="match status" value="1"/>
</dbReference>
<dbReference type="PANTHER" id="PTHR42898">
    <property type="entry name" value="TROPINONE REDUCTASE"/>
    <property type="match status" value="1"/>
</dbReference>
<dbReference type="Pfam" id="PF13561">
    <property type="entry name" value="adh_short_C2"/>
    <property type="match status" value="1"/>
</dbReference>
<dbReference type="PRINTS" id="PR00081">
    <property type="entry name" value="GDHRDH"/>
</dbReference>
<dbReference type="PRINTS" id="PR00080">
    <property type="entry name" value="SDRFAMILY"/>
</dbReference>
<dbReference type="SUPFAM" id="SSF51735">
    <property type="entry name" value="NAD(P)-binding Rossmann-fold domains"/>
    <property type="match status" value="1"/>
</dbReference>
<sequence length="263" mass="28256">MDKRWSLQGMTALVTGAASGIGYAIVEELAGFGARIHVCDISETLLNQSLREWEKKGFQVSGSVCDVTSRPEREKLMQTVSSLFDGKLNILVNNVGVLRAKPTTEYVADDFTFHISTNLEAAYHFCQLSHPLLKTSGYGSIVFLSSVSGVVSITDCGSLYGLTKGALNQLARNLACEWAKDGIRANAVAPNVVKTAQSQFFLQDVSKKEGLFSRTPLGRSGEPNEVASLVVFLCLPAASYITGQTICIDGGLTVYGFSSQPQA</sequence>
<feature type="chain" id="PRO_0000432362" description="Tropinone reductase homolog At2g29300">
    <location>
        <begin position="1"/>
        <end position="263"/>
    </location>
</feature>
<feature type="active site" description="Proton acceptor" evidence="2">
    <location>
        <position position="160"/>
    </location>
</feature>
<feature type="binding site" evidence="1">
    <location>
        <begin position="13"/>
        <end position="37"/>
    </location>
    <ligand>
        <name>NADP(+)</name>
        <dbReference type="ChEBI" id="CHEBI:58349"/>
    </ligand>
</feature>
<feature type="binding site" evidence="1">
    <location>
        <position position="146"/>
    </location>
    <ligand>
        <name>substrate</name>
    </ligand>
</feature>
<organism evidence="6">
    <name type="scientific">Arabidopsis thaliana</name>
    <name type="common">Mouse-ear cress</name>
    <dbReference type="NCBI Taxonomy" id="3702"/>
    <lineage>
        <taxon>Eukaryota</taxon>
        <taxon>Viridiplantae</taxon>
        <taxon>Streptophyta</taxon>
        <taxon>Embryophyta</taxon>
        <taxon>Tracheophyta</taxon>
        <taxon>Spermatophyta</taxon>
        <taxon>Magnoliopsida</taxon>
        <taxon>eudicotyledons</taxon>
        <taxon>Gunneridae</taxon>
        <taxon>Pentapetalae</taxon>
        <taxon>rosids</taxon>
        <taxon>malvids</taxon>
        <taxon>Brassicales</taxon>
        <taxon>Brassicaceae</taxon>
        <taxon>Camelineae</taxon>
        <taxon>Arabidopsis</taxon>
    </lineage>
</organism>
<protein>
    <recommendedName>
        <fullName evidence="3">Tropinone reductase homolog At2g29300</fullName>
        <ecNumber evidence="3">1.1.1.-</ecNumber>
    </recommendedName>
</protein>
<accession>Q42182</accession>
<gene>
    <name evidence="4" type="ordered locus">At2g29300</name>
    <name evidence="5" type="ORF">F16P2.32</name>
</gene>
<evidence type="ECO:0000250" key="1">
    <source>
        <dbReference type="UniProtKB" id="P50162"/>
    </source>
</evidence>
<evidence type="ECO:0000255" key="2">
    <source>
        <dbReference type="PROSITE-ProRule" id="PRU10001"/>
    </source>
</evidence>
<evidence type="ECO:0000305" key="3"/>
<evidence type="ECO:0000312" key="4">
    <source>
        <dbReference type="Araport" id="AT2G29300"/>
    </source>
</evidence>
<evidence type="ECO:0000312" key="5">
    <source>
        <dbReference type="EMBL" id="AAC95221.1"/>
    </source>
</evidence>
<evidence type="ECO:0000312" key="6">
    <source>
        <dbReference type="Proteomes" id="UP000006548"/>
    </source>
</evidence>
<comment type="similarity">
    <text evidence="3">Belongs to the short-chain dehydrogenases/reductases (SDR) family. SDR65C subfamily.</text>
</comment>
<reference key="1">
    <citation type="journal article" date="1999" name="Nature">
        <title>Sequence and analysis of chromosome 2 of the plant Arabidopsis thaliana.</title>
        <authorList>
            <person name="Lin X."/>
            <person name="Kaul S."/>
            <person name="Rounsley S.D."/>
            <person name="Shea T.P."/>
            <person name="Benito M.-I."/>
            <person name="Town C.D."/>
            <person name="Fujii C.Y."/>
            <person name="Mason T.M."/>
            <person name="Bowman C.L."/>
            <person name="Barnstead M.E."/>
            <person name="Feldblyum T.V."/>
            <person name="Buell C.R."/>
            <person name="Ketchum K.A."/>
            <person name="Lee J.J."/>
            <person name="Ronning C.M."/>
            <person name="Koo H.L."/>
            <person name="Moffat K.S."/>
            <person name="Cronin L.A."/>
            <person name="Shen M."/>
            <person name="Pai G."/>
            <person name="Van Aken S."/>
            <person name="Umayam L."/>
            <person name="Tallon L.J."/>
            <person name="Gill J.E."/>
            <person name="Adams M.D."/>
            <person name="Carrera A.J."/>
            <person name="Creasy T.H."/>
            <person name="Goodman H.M."/>
            <person name="Somerville C.R."/>
            <person name="Copenhaver G.P."/>
            <person name="Preuss D."/>
            <person name="Nierman W.C."/>
            <person name="White O."/>
            <person name="Eisen J.A."/>
            <person name="Salzberg S.L."/>
            <person name="Fraser C.M."/>
            <person name="Venter J.C."/>
        </authorList>
    </citation>
    <scope>NUCLEOTIDE SEQUENCE [LARGE SCALE GENOMIC DNA]</scope>
    <source>
        <strain>cv. Columbia</strain>
    </source>
</reference>
<reference key="2">
    <citation type="journal article" date="2017" name="Plant J.">
        <title>Araport11: a complete reannotation of the Arabidopsis thaliana reference genome.</title>
        <authorList>
            <person name="Cheng C.Y."/>
            <person name="Krishnakumar V."/>
            <person name="Chan A.P."/>
            <person name="Thibaud-Nissen F."/>
            <person name="Schobel S."/>
            <person name="Town C.D."/>
        </authorList>
    </citation>
    <scope>GENOME REANNOTATION</scope>
    <source>
        <strain>cv. Columbia</strain>
    </source>
</reference>
<reference key="3">
    <citation type="journal article" date="2003" name="Science">
        <title>Empirical analysis of transcriptional activity in the Arabidopsis genome.</title>
        <authorList>
            <person name="Yamada K."/>
            <person name="Lim J."/>
            <person name="Dale J.M."/>
            <person name="Chen H."/>
            <person name="Shinn P."/>
            <person name="Palm C.J."/>
            <person name="Southwick A.M."/>
            <person name="Wu H.C."/>
            <person name="Kim C.J."/>
            <person name="Nguyen M."/>
            <person name="Pham P.K."/>
            <person name="Cheuk R.F."/>
            <person name="Karlin-Newmann G."/>
            <person name="Liu S.X."/>
            <person name="Lam B."/>
            <person name="Sakano H."/>
            <person name="Wu T."/>
            <person name="Yu G."/>
            <person name="Miranda M."/>
            <person name="Quach H.L."/>
            <person name="Tripp M."/>
            <person name="Chang C.H."/>
            <person name="Lee J.M."/>
            <person name="Toriumi M.J."/>
            <person name="Chan M.M."/>
            <person name="Tang C.C."/>
            <person name="Onodera C.S."/>
            <person name="Deng J.M."/>
            <person name="Akiyama K."/>
            <person name="Ansari Y."/>
            <person name="Arakawa T."/>
            <person name="Banh J."/>
            <person name="Banno F."/>
            <person name="Bowser L."/>
            <person name="Brooks S.Y."/>
            <person name="Carninci P."/>
            <person name="Chao Q."/>
            <person name="Choy N."/>
            <person name="Enju A."/>
            <person name="Goldsmith A.D."/>
            <person name="Gurjal M."/>
            <person name="Hansen N.F."/>
            <person name="Hayashizaki Y."/>
            <person name="Johnson-Hopson C."/>
            <person name="Hsuan V.W."/>
            <person name="Iida K."/>
            <person name="Karnes M."/>
            <person name="Khan S."/>
            <person name="Koesema E."/>
            <person name="Ishida J."/>
            <person name="Jiang P.X."/>
            <person name="Jones T."/>
            <person name="Kawai J."/>
            <person name="Kamiya A."/>
            <person name="Meyers C."/>
            <person name="Nakajima M."/>
            <person name="Narusaka M."/>
            <person name="Seki M."/>
            <person name="Sakurai T."/>
            <person name="Satou M."/>
            <person name="Tamse R."/>
            <person name="Vaysberg M."/>
            <person name="Wallender E.K."/>
            <person name="Wong C."/>
            <person name="Yamamura Y."/>
            <person name="Yuan S."/>
            <person name="Shinozaki K."/>
            <person name="Davis R.W."/>
            <person name="Theologis A."/>
            <person name="Ecker J.R."/>
        </authorList>
    </citation>
    <scope>NUCLEOTIDE SEQUENCE [LARGE SCALE MRNA]</scope>
    <source>
        <strain>cv. Columbia</strain>
    </source>
</reference>
<reference key="4">
    <citation type="journal article" date="2009" name="Chem. Biol. Interact.">
        <title>The SDR (short-chain dehydrogenase/reductase and related enzymes) nomenclature initiative.</title>
        <authorList>
            <person name="Persson B."/>
            <person name="Kallberg Y."/>
            <person name="Bray J.E."/>
            <person name="Bruford E."/>
            <person name="Dellaporta S.L."/>
            <person name="Favia A.D."/>
            <person name="Duarte R.G."/>
            <person name="Joernvall H."/>
            <person name="Kavanagh K.L."/>
            <person name="Kedishvili N."/>
            <person name="Kisiela M."/>
            <person name="Maser E."/>
            <person name="Mindnich R."/>
            <person name="Orchard S."/>
            <person name="Penning T.M."/>
            <person name="Thornton J.M."/>
            <person name="Adamski J."/>
            <person name="Oppermann U."/>
        </authorList>
    </citation>
    <scope>GENE FAMILY</scope>
    <scope>NOMENCLATURE</scope>
</reference>
<name>TRNH7_ARATH</name>
<proteinExistence type="evidence at transcript level"/>